<gene>
    <name type="primary">RPL13D</name>
    <name type="ordered locus">At5g23900</name>
    <name type="ORF">MRO11.6</name>
</gene>
<keyword id="KW-1185">Reference proteome</keyword>
<keyword id="KW-0687">Ribonucleoprotein</keyword>
<keyword id="KW-0689">Ribosomal protein</keyword>
<accession>Q9FF90</accession>
<evidence type="ECO:0000256" key="1">
    <source>
        <dbReference type="SAM" id="MobiDB-lite"/>
    </source>
</evidence>
<evidence type="ECO:0000303" key="2">
    <source>
    </source>
</evidence>
<evidence type="ECO:0000305" key="3"/>
<protein>
    <recommendedName>
        <fullName evidence="2">Large ribosomal subunit protein eL13x</fullName>
    </recommendedName>
    <alternativeName>
        <fullName>60S ribosomal protein L13-3</fullName>
    </alternativeName>
</protein>
<name>RL133_ARATH</name>
<organism>
    <name type="scientific">Arabidopsis thaliana</name>
    <name type="common">Mouse-ear cress</name>
    <dbReference type="NCBI Taxonomy" id="3702"/>
    <lineage>
        <taxon>Eukaryota</taxon>
        <taxon>Viridiplantae</taxon>
        <taxon>Streptophyta</taxon>
        <taxon>Embryophyta</taxon>
        <taxon>Tracheophyta</taxon>
        <taxon>Spermatophyta</taxon>
        <taxon>Magnoliopsida</taxon>
        <taxon>eudicotyledons</taxon>
        <taxon>Gunneridae</taxon>
        <taxon>Pentapetalae</taxon>
        <taxon>rosids</taxon>
        <taxon>malvids</taxon>
        <taxon>Brassicales</taxon>
        <taxon>Brassicaceae</taxon>
        <taxon>Camelineae</taxon>
        <taxon>Arabidopsis</taxon>
    </lineage>
</organism>
<comment type="similarity">
    <text evidence="3">Belongs to the eukaryotic ribosomal protein eL13 family.</text>
</comment>
<sequence>MKHNNVIPSSHFRKHWQNYVKTWFNQPARKTRRRVARQKKAVKIFPRPTSGPLRPVVHGQTLKYNMKVRAGKGFTLEELKVAGIPKKLAPTIGISVDHRRKNRSLEGLQSNVQRLKTYKAKLVVFPRRSRQVKAGDSTPEELANATQVQGDYMPIASVKAAMELVKLTADLKAFKAYDKIRLERTNARHAGARAKRAAEAEKEEKK</sequence>
<reference key="1">
    <citation type="journal article" date="1997" name="DNA Res.">
        <title>Structural analysis of Arabidopsis thaliana chromosome 5. I. Sequence features of the 1.6 Mb regions covered by twenty physically assigned P1 clones.</title>
        <authorList>
            <person name="Sato S."/>
            <person name="Kotani H."/>
            <person name="Nakamura Y."/>
            <person name="Kaneko T."/>
            <person name="Asamizu E."/>
            <person name="Fukami M."/>
            <person name="Miyajima N."/>
            <person name="Tabata S."/>
        </authorList>
    </citation>
    <scope>NUCLEOTIDE SEQUENCE [LARGE SCALE GENOMIC DNA]</scope>
    <source>
        <strain>cv. Columbia</strain>
    </source>
</reference>
<reference key="2">
    <citation type="journal article" date="2017" name="Plant J.">
        <title>Araport11: a complete reannotation of the Arabidopsis thaliana reference genome.</title>
        <authorList>
            <person name="Cheng C.Y."/>
            <person name="Krishnakumar V."/>
            <person name="Chan A.P."/>
            <person name="Thibaud-Nissen F."/>
            <person name="Schobel S."/>
            <person name="Town C.D."/>
        </authorList>
    </citation>
    <scope>GENOME REANNOTATION</scope>
    <source>
        <strain>cv. Columbia</strain>
    </source>
</reference>
<reference key="3">
    <citation type="journal article" date="2003" name="Science">
        <title>Empirical analysis of transcriptional activity in the Arabidopsis genome.</title>
        <authorList>
            <person name="Yamada K."/>
            <person name="Lim J."/>
            <person name="Dale J.M."/>
            <person name="Chen H."/>
            <person name="Shinn P."/>
            <person name="Palm C.J."/>
            <person name="Southwick A.M."/>
            <person name="Wu H.C."/>
            <person name="Kim C.J."/>
            <person name="Nguyen M."/>
            <person name="Pham P.K."/>
            <person name="Cheuk R.F."/>
            <person name="Karlin-Newmann G."/>
            <person name="Liu S.X."/>
            <person name="Lam B."/>
            <person name="Sakano H."/>
            <person name="Wu T."/>
            <person name="Yu G."/>
            <person name="Miranda M."/>
            <person name="Quach H.L."/>
            <person name="Tripp M."/>
            <person name="Chang C.H."/>
            <person name="Lee J.M."/>
            <person name="Toriumi M.J."/>
            <person name="Chan M.M."/>
            <person name="Tang C.C."/>
            <person name="Onodera C.S."/>
            <person name="Deng J.M."/>
            <person name="Akiyama K."/>
            <person name="Ansari Y."/>
            <person name="Arakawa T."/>
            <person name="Banh J."/>
            <person name="Banno F."/>
            <person name="Bowser L."/>
            <person name="Brooks S.Y."/>
            <person name="Carninci P."/>
            <person name="Chao Q."/>
            <person name="Choy N."/>
            <person name="Enju A."/>
            <person name="Goldsmith A.D."/>
            <person name="Gurjal M."/>
            <person name="Hansen N.F."/>
            <person name="Hayashizaki Y."/>
            <person name="Johnson-Hopson C."/>
            <person name="Hsuan V.W."/>
            <person name="Iida K."/>
            <person name="Karnes M."/>
            <person name="Khan S."/>
            <person name="Koesema E."/>
            <person name="Ishida J."/>
            <person name="Jiang P.X."/>
            <person name="Jones T."/>
            <person name="Kawai J."/>
            <person name="Kamiya A."/>
            <person name="Meyers C."/>
            <person name="Nakajima M."/>
            <person name="Narusaka M."/>
            <person name="Seki M."/>
            <person name="Sakurai T."/>
            <person name="Satou M."/>
            <person name="Tamse R."/>
            <person name="Vaysberg M."/>
            <person name="Wallender E.K."/>
            <person name="Wong C."/>
            <person name="Yamamura Y."/>
            <person name="Yuan S."/>
            <person name="Shinozaki K."/>
            <person name="Davis R.W."/>
            <person name="Theologis A."/>
            <person name="Ecker J.R."/>
        </authorList>
    </citation>
    <scope>NUCLEOTIDE SEQUENCE [LARGE SCALE MRNA]</scope>
    <source>
        <strain>cv. Columbia</strain>
    </source>
</reference>
<reference key="4">
    <citation type="journal article" date="2001" name="Plant Physiol.">
        <title>The organization of cytoplasmic ribosomal protein genes in the Arabidopsis genome.</title>
        <authorList>
            <person name="Barakat A."/>
            <person name="Szick-Miranda K."/>
            <person name="Chang I.-F."/>
            <person name="Guyot R."/>
            <person name="Blanc G."/>
            <person name="Cooke R."/>
            <person name="Delseny M."/>
            <person name="Bailey-Serres J."/>
        </authorList>
    </citation>
    <scope>GENE FAMILY ORGANIZATION</scope>
    <scope>NOMENCLATURE</scope>
</reference>
<reference key="5">
    <citation type="journal article" date="2009" name="Plant Physiol.">
        <title>Large-scale Arabidopsis phosphoproteome profiling reveals novel chloroplast kinase substrates and phosphorylation networks.</title>
        <authorList>
            <person name="Reiland S."/>
            <person name="Messerli G."/>
            <person name="Baerenfaller K."/>
            <person name="Gerrits B."/>
            <person name="Endler A."/>
            <person name="Grossmann J."/>
            <person name="Gruissem W."/>
            <person name="Baginsky S."/>
        </authorList>
    </citation>
    <scope>IDENTIFICATION BY MASS SPECTROMETRY [LARGE SCALE ANALYSIS]</scope>
</reference>
<reference key="6">
    <citation type="journal article" date="2023" name="Plant Cell">
        <title>An updated nomenclature for plant ribosomal protein genes.</title>
        <authorList>
            <person name="Scarpin M.R."/>
            <person name="Busche M."/>
            <person name="Martinez R.E."/>
            <person name="Harper L.C."/>
            <person name="Reiser L."/>
            <person name="Szakonyi D."/>
            <person name="Merchante C."/>
            <person name="Lan T."/>
            <person name="Xiong W."/>
            <person name="Mo B."/>
            <person name="Tang G."/>
            <person name="Chen X."/>
            <person name="Bailey-Serres J."/>
            <person name="Browning K.S."/>
            <person name="Brunkard J.O."/>
        </authorList>
    </citation>
    <scope>NOMENCLATURE</scope>
</reference>
<proteinExistence type="evidence at protein level"/>
<feature type="chain" id="PRO_0000240515" description="Large ribosomal subunit protein eL13x">
    <location>
        <begin position="1"/>
        <end position="206"/>
    </location>
</feature>
<feature type="region of interest" description="Disordered" evidence="1">
    <location>
        <begin position="186"/>
        <end position="206"/>
    </location>
</feature>
<feature type="compositionally biased region" description="Basic and acidic residues" evidence="1">
    <location>
        <begin position="196"/>
        <end position="206"/>
    </location>
</feature>
<dbReference type="EMBL" id="AB005244">
    <property type="protein sequence ID" value="BAB10063.1"/>
    <property type="molecule type" value="Genomic_DNA"/>
</dbReference>
<dbReference type="EMBL" id="CP002688">
    <property type="protein sequence ID" value="AED93230.1"/>
    <property type="molecule type" value="Genomic_DNA"/>
</dbReference>
<dbReference type="EMBL" id="AF378895">
    <property type="protein sequence ID" value="AAK55698.1"/>
    <property type="molecule type" value="mRNA"/>
</dbReference>
<dbReference type="EMBL" id="AY052746">
    <property type="protein sequence ID" value="AAK96460.1"/>
    <property type="molecule type" value="mRNA"/>
</dbReference>
<dbReference type="RefSeq" id="NP_197778.1">
    <property type="nucleotide sequence ID" value="NM_122295.4"/>
</dbReference>
<dbReference type="SMR" id="Q9FF90"/>
<dbReference type="BioGRID" id="17730">
    <property type="interactions" value="130"/>
</dbReference>
<dbReference type="FunCoup" id="Q9FF90">
    <property type="interactions" value="3435"/>
</dbReference>
<dbReference type="STRING" id="3702.Q9FF90"/>
<dbReference type="iPTMnet" id="Q9FF90"/>
<dbReference type="PaxDb" id="3702-AT5G23900.1"/>
<dbReference type="ProteomicsDB" id="226323"/>
<dbReference type="EnsemblPlants" id="AT5G23900.1">
    <property type="protein sequence ID" value="AT5G23900.1"/>
    <property type="gene ID" value="AT5G23900"/>
</dbReference>
<dbReference type="GeneID" id="832455"/>
<dbReference type="Gramene" id="AT5G23900.1">
    <property type="protein sequence ID" value="AT5G23900.1"/>
    <property type="gene ID" value="AT5G23900"/>
</dbReference>
<dbReference type="KEGG" id="ath:AT5G23900"/>
<dbReference type="Araport" id="AT5G23900"/>
<dbReference type="TAIR" id="AT5G23900"/>
<dbReference type="eggNOG" id="KOG3295">
    <property type="taxonomic scope" value="Eukaryota"/>
</dbReference>
<dbReference type="HOGENOM" id="CLU_075696_1_0_1"/>
<dbReference type="InParanoid" id="Q9FF90"/>
<dbReference type="OMA" id="NAYESCE"/>
<dbReference type="PhylomeDB" id="Q9FF90"/>
<dbReference type="PRO" id="PR:Q9FF90"/>
<dbReference type="Proteomes" id="UP000006548">
    <property type="component" value="Chromosome 5"/>
</dbReference>
<dbReference type="ExpressionAtlas" id="Q9FF90">
    <property type="expression patterns" value="baseline and differential"/>
</dbReference>
<dbReference type="GO" id="GO:0022625">
    <property type="term" value="C:cytosolic large ribosomal subunit"/>
    <property type="evidence" value="ECO:0007005"/>
    <property type="project" value="TAIR"/>
</dbReference>
<dbReference type="GO" id="GO:0022626">
    <property type="term" value="C:cytosolic ribosome"/>
    <property type="evidence" value="ECO:0007005"/>
    <property type="project" value="TAIR"/>
</dbReference>
<dbReference type="GO" id="GO:0009536">
    <property type="term" value="C:plastid"/>
    <property type="evidence" value="ECO:0007005"/>
    <property type="project" value="TAIR"/>
</dbReference>
<dbReference type="GO" id="GO:0003735">
    <property type="term" value="F:structural constituent of ribosome"/>
    <property type="evidence" value="ECO:0000314"/>
    <property type="project" value="CAFA"/>
</dbReference>
<dbReference type="GO" id="GO:0006412">
    <property type="term" value="P:translation"/>
    <property type="evidence" value="ECO:0007669"/>
    <property type="project" value="InterPro"/>
</dbReference>
<dbReference type="FunFam" id="1.20.5.110:FF:000003">
    <property type="entry name" value="60S ribosomal protein L13"/>
    <property type="match status" value="1"/>
</dbReference>
<dbReference type="Gene3D" id="1.20.5.110">
    <property type="match status" value="1"/>
</dbReference>
<dbReference type="HAMAP" id="MF_00499">
    <property type="entry name" value="Ribosomal_eL13"/>
    <property type="match status" value="1"/>
</dbReference>
<dbReference type="InterPro" id="IPR001380">
    <property type="entry name" value="Ribosomal_eL13"/>
</dbReference>
<dbReference type="InterPro" id="IPR018256">
    <property type="entry name" value="Ribosomal_eL13_CS"/>
</dbReference>
<dbReference type="PANTHER" id="PTHR11722">
    <property type="entry name" value="60S RIBOSOMAL PROTEIN L13"/>
    <property type="match status" value="1"/>
</dbReference>
<dbReference type="PANTHER" id="PTHR11722:SF0">
    <property type="entry name" value="LARGE RIBOSOMAL SUBUNIT PROTEIN EL13"/>
    <property type="match status" value="1"/>
</dbReference>
<dbReference type="Pfam" id="PF01294">
    <property type="entry name" value="Ribosomal_L13e"/>
    <property type="match status" value="1"/>
</dbReference>
<dbReference type="PROSITE" id="PS01104">
    <property type="entry name" value="RIBOSOMAL_L13E"/>
    <property type="match status" value="1"/>
</dbReference>